<keyword id="KW-0963">Cytoplasm</keyword>
<keyword id="KW-0648">Protein biosynthesis</keyword>
<comment type="function">
    <text evidence="1">Responsible for the release of ribosomes from messenger RNA at the termination of protein biosynthesis. May increase the efficiency of translation by recycling ribosomes from one round of translation to another.</text>
</comment>
<comment type="subcellular location">
    <subcellularLocation>
        <location evidence="1">Cytoplasm</location>
    </subcellularLocation>
</comment>
<comment type="similarity">
    <text evidence="1">Belongs to the RRF family.</text>
</comment>
<gene>
    <name evidence="1" type="primary">frr</name>
    <name type="ordered locus">Mvan_2221</name>
</gene>
<sequence>MIDETLFDAEEKMEKAVAVARDDLASIRTGRANPGMFNRIHVDYYGAVTPITQLSSINVPEARMVVIKPYEASQLRPIEDAIRNSDLGVNPTNDGNVIRVSIPQLTEERRRDLVKQAKGKGEDAKVSVRNIRRKAMEELTRIKKDGDAGEDDVARAEKDLDKTTQQYTHQIDELVKHKEGELLEV</sequence>
<protein>
    <recommendedName>
        <fullName evidence="1">Ribosome-recycling factor</fullName>
        <shortName evidence="1">RRF</shortName>
    </recommendedName>
    <alternativeName>
        <fullName evidence="1">Ribosome-releasing factor</fullName>
    </alternativeName>
</protein>
<feature type="chain" id="PRO_1000003207" description="Ribosome-recycling factor">
    <location>
        <begin position="1"/>
        <end position="185"/>
    </location>
</feature>
<name>RRF_MYCVP</name>
<accession>A1T785</accession>
<organism>
    <name type="scientific">Mycolicibacterium vanbaalenii (strain DSM 7251 / JCM 13017 / BCRC 16820 / KCTC 9966 / NRRL B-24157 / PYR-1)</name>
    <name type="common">Mycobacterium vanbaalenii</name>
    <dbReference type="NCBI Taxonomy" id="350058"/>
    <lineage>
        <taxon>Bacteria</taxon>
        <taxon>Bacillati</taxon>
        <taxon>Actinomycetota</taxon>
        <taxon>Actinomycetes</taxon>
        <taxon>Mycobacteriales</taxon>
        <taxon>Mycobacteriaceae</taxon>
        <taxon>Mycolicibacterium</taxon>
    </lineage>
</organism>
<reference key="1">
    <citation type="submission" date="2006-12" db="EMBL/GenBank/DDBJ databases">
        <title>Complete sequence of Mycobacterium vanbaalenii PYR-1.</title>
        <authorList>
            <consortium name="US DOE Joint Genome Institute"/>
            <person name="Copeland A."/>
            <person name="Lucas S."/>
            <person name="Lapidus A."/>
            <person name="Barry K."/>
            <person name="Detter J.C."/>
            <person name="Glavina del Rio T."/>
            <person name="Hammon N."/>
            <person name="Israni S."/>
            <person name="Dalin E."/>
            <person name="Tice H."/>
            <person name="Pitluck S."/>
            <person name="Singan V."/>
            <person name="Schmutz J."/>
            <person name="Larimer F."/>
            <person name="Land M."/>
            <person name="Hauser L."/>
            <person name="Kyrpides N."/>
            <person name="Anderson I.J."/>
            <person name="Miller C."/>
            <person name="Richardson P."/>
        </authorList>
    </citation>
    <scope>NUCLEOTIDE SEQUENCE [LARGE SCALE GENOMIC DNA]</scope>
    <source>
        <strain>DSM 7251 / JCM 13017 / BCRC 16820 / KCTC 9966 / NRRL B-24157 / PYR-1</strain>
    </source>
</reference>
<proteinExistence type="inferred from homology"/>
<evidence type="ECO:0000255" key="1">
    <source>
        <dbReference type="HAMAP-Rule" id="MF_00040"/>
    </source>
</evidence>
<dbReference type="EMBL" id="CP000511">
    <property type="protein sequence ID" value="ABM13035.1"/>
    <property type="molecule type" value="Genomic_DNA"/>
</dbReference>
<dbReference type="RefSeq" id="WP_011779448.1">
    <property type="nucleotide sequence ID" value="NZ_JACKSD010000090.1"/>
</dbReference>
<dbReference type="SMR" id="A1T785"/>
<dbReference type="STRING" id="350058.Mvan_2221"/>
<dbReference type="KEGG" id="mva:Mvan_2221"/>
<dbReference type="eggNOG" id="COG0233">
    <property type="taxonomic scope" value="Bacteria"/>
</dbReference>
<dbReference type="HOGENOM" id="CLU_073981_2_0_11"/>
<dbReference type="Proteomes" id="UP000009159">
    <property type="component" value="Chromosome"/>
</dbReference>
<dbReference type="GO" id="GO:0005737">
    <property type="term" value="C:cytoplasm"/>
    <property type="evidence" value="ECO:0007669"/>
    <property type="project" value="UniProtKB-SubCell"/>
</dbReference>
<dbReference type="GO" id="GO:0043023">
    <property type="term" value="F:ribosomal large subunit binding"/>
    <property type="evidence" value="ECO:0007669"/>
    <property type="project" value="TreeGrafter"/>
</dbReference>
<dbReference type="GO" id="GO:0006415">
    <property type="term" value="P:translational termination"/>
    <property type="evidence" value="ECO:0007669"/>
    <property type="project" value="UniProtKB-UniRule"/>
</dbReference>
<dbReference type="CDD" id="cd00520">
    <property type="entry name" value="RRF"/>
    <property type="match status" value="1"/>
</dbReference>
<dbReference type="FunFam" id="1.10.132.20:FF:000001">
    <property type="entry name" value="Ribosome-recycling factor"/>
    <property type="match status" value="1"/>
</dbReference>
<dbReference type="FunFam" id="3.30.1360.40:FF:000001">
    <property type="entry name" value="Ribosome-recycling factor"/>
    <property type="match status" value="1"/>
</dbReference>
<dbReference type="Gene3D" id="3.30.1360.40">
    <property type="match status" value="1"/>
</dbReference>
<dbReference type="Gene3D" id="1.10.132.20">
    <property type="entry name" value="Ribosome-recycling factor"/>
    <property type="match status" value="1"/>
</dbReference>
<dbReference type="HAMAP" id="MF_00040">
    <property type="entry name" value="RRF"/>
    <property type="match status" value="1"/>
</dbReference>
<dbReference type="InterPro" id="IPR002661">
    <property type="entry name" value="Ribosome_recyc_fac"/>
</dbReference>
<dbReference type="InterPro" id="IPR023584">
    <property type="entry name" value="Ribosome_recyc_fac_dom"/>
</dbReference>
<dbReference type="InterPro" id="IPR036191">
    <property type="entry name" value="RRF_sf"/>
</dbReference>
<dbReference type="NCBIfam" id="TIGR00496">
    <property type="entry name" value="frr"/>
    <property type="match status" value="1"/>
</dbReference>
<dbReference type="PANTHER" id="PTHR20982:SF3">
    <property type="entry name" value="MITOCHONDRIAL RIBOSOME RECYCLING FACTOR PSEUDO 1"/>
    <property type="match status" value="1"/>
</dbReference>
<dbReference type="PANTHER" id="PTHR20982">
    <property type="entry name" value="RIBOSOME RECYCLING FACTOR"/>
    <property type="match status" value="1"/>
</dbReference>
<dbReference type="Pfam" id="PF01765">
    <property type="entry name" value="RRF"/>
    <property type="match status" value="1"/>
</dbReference>
<dbReference type="SUPFAM" id="SSF55194">
    <property type="entry name" value="Ribosome recycling factor, RRF"/>
    <property type="match status" value="1"/>
</dbReference>